<protein>
    <recommendedName>
        <fullName>Basic phospholipase A2 DsM-S1</fullName>
        <shortName>svPLA2</shortName>
        <ecNumber>3.1.1.4</ecNumber>
    </recommendedName>
    <alternativeName>
        <fullName>Phosphatidylcholine 2-acylhydrolase</fullName>
    </alternativeName>
</protein>
<reference key="1">
    <citation type="journal article" date="2007" name="Biochim. Biophys. Acta">
        <title>Venom phospholipases of Russell's vipers from Myanmar and eastern India--cloning, characterization and phylogeographic analysis.</title>
        <authorList>
            <person name="Tsai I.-H."/>
            <person name="Tsai H.-Y."/>
            <person name="Wang Y.-M."/>
            <person name="Pe T."/>
            <person name="Warrell D.-A."/>
        </authorList>
    </citation>
    <scope>NUCLEOTIDE SEQUENCE [MRNA]</scope>
    <source>
        <strain>Myanmar</strain>
        <tissue>Venom gland</tissue>
    </source>
</reference>
<sequence>MRTLWIVAVCLIGVEGSLLEFGKMILEETGKLAIPSYSSYGCYCGWGGKGTPKDATDRCCFVHDCCYGNLPDCNPKSDRYKYKRVNGAIVCEKGTSCENRICECDKAAAICFRQNLNTYSKKYMLYPDFLCKGELRC</sequence>
<feature type="signal peptide" evidence="1">
    <location>
        <begin position="1"/>
        <end position="16"/>
    </location>
</feature>
<feature type="chain" id="PRO_0000419221" description="Basic phospholipase A2 DsM-S1">
    <location>
        <begin position="17"/>
        <end position="137"/>
    </location>
</feature>
<feature type="active site" evidence="2">
    <location>
        <position position="63"/>
    </location>
</feature>
<feature type="active site" evidence="2">
    <location>
        <position position="105"/>
    </location>
</feature>
<feature type="binding site" evidence="3">
    <location>
        <position position="43"/>
    </location>
    <ligand>
        <name>Ca(2+)</name>
        <dbReference type="ChEBI" id="CHEBI:29108"/>
    </ligand>
</feature>
<feature type="binding site" evidence="3">
    <location>
        <position position="45"/>
    </location>
    <ligand>
        <name>Ca(2+)</name>
        <dbReference type="ChEBI" id="CHEBI:29108"/>
    </ligand>
</feature>
<feature type="binding site" evidence="3">
    <location>
        <position position="47"/>
    </location>
    <ligand>
        <name>Ca(2+)</name>
        <dbReference type="ChEBI" id="CHEBI:29108"/>
    </ligand>
</feature>
<feature type="binding site" evidence="3">
    <location>
        <position position="64"/>
    </location>
    <ligand>
        <name>Ca(2+)</name>
        <dbReference type="ChEBI" id="CHEBI:29108"/>
    </ligand>
</feature>
<feature type="disulfide bond" evidence="3">
    <location>
        <begin position="42"/>
        <end position="131"/>
    </location>
</feature>
<feature type="disulfide bond" evidence="3">
    <location>
        <begin position="44"/>
        <end position="60"/>
    </location>
</feature>
<feature type="disulfide bond" evidence="3">
    <location>
        <begin position="59"/>
        <end position="111"/>
    </location>
</feature>
<feature type="disulfide bond" evidence="3">
    <location>
        <begin position="65"/>
        <end position="137"/>
    </location>
</feature>
<feature type="disulfide bond" evidence="3">
    <location>
        <begin position="66"/>
        <end position="104"/>
    </location>
</feature>
<feature type="disulfide bond" evidence="3">
    <location>
        <begin position="73"/>
        <end position="97"/>
    </location>
</feature>
<feature type="disulfide bond" evidence="3">
    <location>
        <begin position="91"/>
        <end position="102"/>
    </location>
</feature>
<evidence type="ECO:0000250" key="1"/>
<evidence type="ECO:0000250" key="2">
    <source>
        <dbReference type="UniProtKB" id="P14418"/>
    </source>
</evidence>
<evidence type="ECO:0000250" key="3">
    <source>
        <dbReference type="UniProtKB" id="P59071"/>
    </source>
</evidence>
<evidence type="ECO:0000255" key="4">
    <source>
        <dbReference type="PROSITE-ProRule" id="PRU10035"/>
    </source>
</evidence>
<evidence type="ECO:0000255" key="5">
    <source>
        <dbReference type="PROSITE-ProRule" id="PRU10036"/>
    </source>
</evidence>
<evidence type="ECO:0000305" key="6"/>
<evidence type="ECO:0000305" key="7">
    <source>
    </source>
</evidence>
<proteinExistence type="evidence at transcript level"/>
<comment type="function">
    <text evidence="1">Snake venom phospholipase A2 (PLA2) that is neurotoxic. PLA2 catalyzes the calcium-dependent hydrolysis of the 2-acyl groups in 3-sn-phosphoglycerides (By similarity).</text>
</comment>
<comment type="catalytic activity">
    <reaction evidence="4 5">
        <text>a 1,2-diacyl-sn-glycero-3-phosphocholine + H2O = a 1-acyl-sn-glycero-3-phosphocholine + a fatty acid + H(+)</text>
        <dbReference type="Rhea" id="RHEA:15801"/>
        <dbReference type="ChEBI" id="CHEBI:15377"/>
        <dbReference type="ChEBI" id="CHEBI:15378"/>
        <dbReference type="ChEBI" id="CHEBI:28868"/>
        <dbReference type="ChEBI" id="CHEBI:57643"/>
        <dbReference type="ChEBI" id="CHEBI:58168"/>
        <dbReference type="EC" id="3.1.1.4"/>
    </reaction>
</comment>
<comment type="cofactor">
    <cofactor evidence="1">
        <name>Ca(2+)</name>
        <dbReference type="ChEBI" id="CHEBI:29108"/>
    </cofactor>
    <text evidence="1">Binds 1 Ca(2+) ion.</text>
</comment>
<comment type="subcellular location">
    <subcellularLocation>
        <location evidence="1">Secreted</location>
    </subcellularLocation>
</comment>
<comment type="tissue specificity">
    <text>Expressed by the venom gland.</text>
</comment>
<comment type="similarity">
    <text evidence="6">Belongs to the phospholipase A2 family. Group II subfamily. D49 sub-subfamily.</text>
</comment>
<comment type="caution">
    <text evidence="7">This protein is not found in the crude venom.</text>
</comment>
<accession>A8CG84</accession>
<dbReference type="EC" id="3.1.1.4"/>
<dbReference type="EMBL" id="DQ090657">
    <property type="protein sequence ID" value="AAZ53179.1"/>
    <property type="molecule type" value="mRNA"/>
</dbReference>
<dbReference type="SMR" id="A8CG84"/>
<dbReference type="GO" id="GO:0005576">
    <property type="term" value="C:extracellular region"/>
    <property type="evidence" value="ECO:0007669"/>
    <property type="project" value="UniProtKB-SubCell"/>
</dbReference>
<dbReference type="GO" id="GO:0005509">
    <property type="term" value="F:calcium ion binding"/>
    <property type="evidence" value="ECO:0007669"/>
    <property type="project" value="InterPro"/>
</dbReference>
<dbReference type="GO" id="GO:0047498">
    <property type="term" value="F:calcium-dependent phospholipase A2 activity"/>
    <property type="evidence" value="ECO:0007669"/>
    <property type="project" value="TreeGrafter"/>
</dbReference>
<dbReference type="GO" id="GO:0005543">
    <property type="term" value="F:phospholipid binding"/>
    <property type="evidence" value="ECO:0007669"/>
    <property type="project" value="TreeGrafter"/>
</dbReference>
<dbReference type="GO" id="GO:0090729">
    <property type="term" value="F:toxin activity"/>
    <property type="evidence" value="ECO:0007669"/>
    <property type="project" value="UniProtKB-KW"/>
</dbReference>
<dbReference type="GO" id="GO:0050482">
    <property type="term" value="P:arachidonate secretion"/>
    <property type="evidence" value="ECO:0007669"/>
    <property type="project" value="InterPro"/>
</dbReference>
<dbReference type="GO" id="GO:0016042">
    <property type="term" value="P:lipid catabolic process"/>
    <property type="evidence" value="ECO:0007669"/>
    <property type="project" value="UniProtKB-KW"/>
</dbReference>
<dbReference type="GO" id="GO:0042130">
    <property type="term" value="P:negative regulation of T cell proliferation"/>
    <property type="evidence" value="ECO:0007669"/>
    <property type="project" value="TreeGrafter"/>
</dbReference>
<dbReference type="GO" id="GO:0006644">
    <property type="term" value="P:phospholipid metabolic process"/>
    <property type="evidence" value="ECO:0007669"/>
    <property type="project" value="InterPro"/>
</dbReference>
<dbReference type="CDD" id="cd00125">
    <property type="entry name" value="PLA2c"/>
    <property type="match status" value="1"/>
</dbReference>
<dbReference type="FunFam" id="1.20.90.10:FF:000001">
    <property type="entry name" value="Basic phospholipase A2 homolog"/>
    <property type="match status" value="1"/>
</dbReference>
<dbReference type="Gene3D" id="1.20.90.10">
    <property type="entry name" value="Phospholipase A2 domain"/>
    <property type="match status" value="1"/>
</dbReference>
<dbReference type="InterPro" id="IPR001211">
    <property type="entry name" value="PLipase_A2"/>
</dbReference>
<dbReference type="InterPro" id="IPR033112">
    <property type="entry name" value="PLipase_A2_Asp_AS"/>
</dbReference>
<dbReference type="InterPro" id="IPR016090">
    <property type="entry name" value="PLipase_A2_dom"/>
</dbReference>
<dbReference type="InterPro" id="IPR036444">
    <property type="entry name" value="PLipase_A2_dom_sf"/>
</dbReference>
<dbReference type="InterPro" id="IPR033113">
    <property type="entry name" value="PLipase_A2_His_AS"/>
</dbReference>
<dbReference type="PANTHER" id="PTHR11716">
    <property type="entry name" value="PHOSPHOLIPASE A2 FAMILY MEMBER"/>
    <property type="match status" value="1"/>
</dbReference>
<dbReference type="PANTHER" id="PTHR11716:SF9">
    <property type="entry name" value="PHOSPHOLIPASE A2, MEMBRANE ASSOCIATED"/>
    <property type="match status" value="1"/>
</dbReference>
<dbReference type="Pfam" id="PF00068">
    <property type="entry name" value="Phospholip_A2_1"/>
    <property type="match status" value="1"/>
</dbReference>
<dbReference type="PRINTS" id="PR00389">
    <property type="entry name" value="PHPHLIPASEA2"/>
</dbReference>
<dbReference type="SMART" id="SM00085">
    <property type="entry name" value="PA2c"/>
    <property type="match status" value="1"/>
</dbReference>
<dbReference type="SUPFAM" id="SSF48619">
    <property type="entry name" value="Phospholipase A2, PLA2"/>
    <property type="match status" value="1"/>
</dbReference>
<dbReference type="PROSITE" id="PS00119">
    <property type="entry name" value="PA2_ASP"/>
    <property type="match status" value="1"/>
</dbReference>
<dbReference type="PROSITE" id="PS00118">
    <property type="entry name" value="PA2_HIS"/>
    <property type="match status" value="1"/>
</dbReference>
<organism>
    <name type="scientific">Daboia siamensis</name>
    <name type="common">Eastern Russel's viper</name>
    <name type="synonym">Daboia russelii siamensis</name>
    <dbReference type="NCBI Taxonomy" id="343250"/>
    <lineage>
        <taxon>Eukaryota</taxon>
        <taxon>Metazoa</taxon>
        <taxon>Chordata</taxon>
        <taxon>Craniata</taxon>
        <taxon>Vertebrata</taxon>
        <taxon>Euteleostomi</taxon>
        <taxon>Lepidosauria</taxon>
        <taxon>Squamata</taxon>
        <taxon>Bifurcata</taxon>
        <taxon>Unidentata</taxon>
        <taxon>Episquamata</taxon>
        <taxon>Toxicofera</taxon>
        <taxon>Serpentes</taxon>
        <taxon>Colubroidea</taxon>
        <taxon>Viperidae</taxon>
        <taxon>Viperinae</taxon>
        <taxon>Daboia</taxon>
    </lineage>
</organism>
<keyword id="KW-1015">Disulfide bond</keyword>
<keyword id="KW-0378">Hydrolase</keyword>
<keyword id="KW-0442">Lipid degradation</keyword>
<keyword id="KW-0443">Lipid metabolism</keyword>
<keyword id="KW-0479">Metal-binding</keyword>
<keyword id="KW-0528">Neurotoxin</keyword>
<keyword id="KW-0964">Secreted</keyword>
<keyword id="KW-0732">Signal</keyword>
<keyword id="KW-0800">Toxin</keyword>
<name>PA2BS_DABSI</name>